<accession>Q979K1</accession>
<keyword id="KW-0687">Ribonucleoprotein</keyword>
<keyword id="KW-0689">Ribosomal protein</keyword>
<name>RS9_THEVO</name>
<comment type="similarity">
    <text evidence="1">Belongs to the universal ribosomal protein uS9 family.</text>
</comment>
<reference key="1">
    <citation type="journal article" date="2000" name="Proc. Natl. Acad. Sci. U.S.A.">
        <title>Archaeal adaptation to higher temperatures revealed by genomic sequence of Thermoplasma volcanium.</title>
        <authorList>
            <person name="Kawashima T."/>
            <person name="Amano N."/>
            <person name="Koike H."/>
            <person name="Makino S."/>
            <person name="Higuchi S."/>
            <person name="Kawashima-Ohya Y."/>
            <person name="Watanabe K."/>
            <person name="Yamazaki M."/>
            <person name="Kanehori K."/>
            <person name="Kawamoto T."/>
            <person name="Nunoshiba T."/>
            <person name="Yamamoto Y."/>
            <person name="Aramaki H."/>
            <person name="Makino K."/>
            <person name="Suzuki M."/>
        </authorList>
    </citation>
    <scope>NUCLEOTIDE SEQUENCE [LARGE SCALE GENOMIC DNA]</scope>
    <source>
        <strain>ATCC 51530 / DSM 4299 / JCM 9571 / NBRC 15438 / GSS1</strain>
    </source>
</reference>
<feature type="chain" id="PRO_0000111478" description="Small ribosomal subunit protein uS9">
    <location>
        <begin position="1"/>
        <end position="132"/>
    </location>
</feature>
<dbReference type="EMBL" id="BA000011">
    <property type="protein sequence ID" value="BAB60302.1"/>
    <property type="molecule type" value="Genomic_DNA"/>
</dbReference>
<dbReference type="RefSeq" id="WP_010917394.1">
    <property type="nucleotide sequence ID" value="NC_002689.2"/>
</dbReference>
<dbReference type="SMR" id="Q979K1"/>
<dbReference type="STRING" id="273116.gene:9381960"/>
<dbReference type="PaxDb" id="273116-14325398"/>
<dbReference type="GeneID" id="1441276"/>
<dbReference type="KEGG" id="tvo:TVG1187879"/>
<dbReference type="eggNOG" id="arCOG04243">
    <property type="taxonomic scope" value="Archaea"/>
</dbReference>
<dbReference type="HOGENOM" id="CLU_046483_4_0_2"/>
<dbReference type="OrthoDB" id="52677at2157"/>
<dbReference type="PhylomeDB" id="Q979K1"/>
<dbReference type="Proteomes" id="UP000001017">
    <property type="component" value="Chromosome"/>
</dbReference>
<dbReference type="GO" id="GO:0022627">
    <property type="term" value="C:cytosolic small ribosomal subunit"/>
    <property type="evidence" value="ECO:0007669"/>
    <property type="project" value="TreeGrafter"/>
</dbReference>
<dbReference type="GO" id="GO:0003723">
    <property type="term" value="F:RNA binding"/>
    <property type="evidence" value="ECO:0007669"/>
    <property type="project" value="TreeGrafter"/>
</dbReference>
<dbReference type="GO" id="GO:0003735">
    <property type="term" value="F:structural constituent of ribosome"/>
    <property type="evidence" value="ECO:0007669"/>
    <property type="project" value="InterPro"/>
</dbReference>
<dbReference type="GO" id="GO:0000462">
    <property type="term" value="P:maturation of SSU-rRNA from tricistronic rRNA transcript (SSU-rRNA, 5.8S rRNA, LSU-rRNA)"/>
    <property type="evidence" value="ECO:0007669"/>
    <property type="project" value="TreeGrafter"/>
</dbReference>
<dbReference type="GO" id="GO:0006412">
    <property type="term" value="P:translation"/>
    <property type="evidence" value="ECO:0007669"/>
    <property type="project" value="UniProtKB-UniRule"/>
</dbReference>
<dbReference type="Gene3D" id="3.30.230.10">
    <property type="match status" value="1"/>
</dbReference>
<dbReference type="HAMAP" id="MF_00532_A">
    <property type="entry name" value="Ribosomal_uS9_A"/>
    <property type="match status" value="1"/>
</dbReference>
<dbReference type="InterPro" id="IPR020568">
    <property type="entry name" value="Ribosomal_Su5_D2-typ_SF"/>
</dbReference>
<dbReference type="InterPro" id="IPR000754">
    <property type="entry name" value="Ribosomal_uS9"/>
</dbReference>
<dbReference type="InterPro" id="IPR019958">
    <property type="entry name" value="Ribosomal_uS9_archaeal"/>
</dbReference>
<dbReference type="InterPro" id="IPR020574">
    <property type="entry name" value="Ribosomal_uS9_CS"/>
</dbReference>
<dbReference type="InterPro" id="IPR014721">
    <property type="entry name" value="Ribsml_uS5_D2-typ_fold_subgr"/>
</dbReference>
<dbReference type="NCBIfam" id="NF001749">
    <property type="entry name" value="PRK00474.1"/>
    <property type="match status" value="1"/>
</dbReference>
<dbReference type="NCBIfam" id="TIGR03627">
    <property type="entry name" value="uS9_arch"/>
    <property type="match status" value="1"/>
</dbReference>
<dbReference type="PANTHER" id="PTHR21569:SF16">
    <property type="entry name" value="RIBOSOMAL PROTEIN S16"/>
    <property type="match status" value="1"/>
</dbReference>
<dbReference type="PANTHER" id="PTHR21569">
    <property type="entry name" value="RIBOSOMAL PROTEIN S9"/>
    <property type="match status" value="1"/>
</dbReference>
<dbReference type="Pfam" id="PF00380">
    <property type="entry name" value="Ribosomal_S9"/>
    <property type="match status" value="1"/>
</dbReference>
<dbReference type="SUPFAM" id="SSF54211">
    <property type="entry name" value="Ribosomal protein S5 domain 2-like"/>
    <property type="match status" value="1"/>
</dbReference>
<dbReference type="PROSITE" id="PS00360">
    <property type="entry name" value="RIBOSOMAL_S9"/>
    <property type="match status" value="1"/>
</dbReference>
<proteinExistence type="inferred from homology"/>
<sequence>MDYVITTGKRKTAVARAVVKKGKGIITINGTPAELYPVEVLRNKILEPVKLAEDKAKGIDVTVKVKGGGVTGQADASRTAIARGIVKFLQDNELENLFRQYDRTLIVNDVRIKLPKKPGGRGARAKKQKSYR</sequence>
<evidence type="ECO:0000305" key="1"/>
<organism>
    <name type="scientific">Thermoplasma volcanium (strain ATCC 51530 / DSM 4299 / JCM 9571 / NBRC 15438 / GSS1)</name>
    <dbReference type="NCBI Taxonomy" id="273116"/>
    <lineage>
        <taxon>Archaea</taxon>
        <taxon>Methanobacteriati</taxon>
        <taxon>Thermoplasmatota</taxon>
        <taxon>Thermoplasmata</taxon>
        <taxon>Thermoplasmatales</taxon>
        <taxon>Thermoplasmataceae</taxon>
        <taxon>Thermoplasma</taxon>
    </lineage>
</organism>
<protein>
    <recommendedName>
        <fullName evidence="1">Small ribosomal subunit protein uS9</fullName>
    </recommendedName>
    <alternativeName>
        <fullName>30S ribosomal protein S9</fullName>
    </alternativeName>
</protein>
<gene>
    <name type="primary">rps9</name>
    <name type="ordered locus">TV1160</name>
    <name type="ORF">TVG1187879</name>
</gene>